<dbReference type="EC" id="2.4.99.28" evidence="1"/>
<dbReference type="EMBL" id="CP000948">
    <property type="protein sequence ID" value="ACB04284.1"/>
    <property type="molecule type" value="Genomic_DNA"/>
</dbReference>
<dbReference type="RefSeq" id="WP_000047091.1">
    <property type="nucleotide sequence ID" value="NC_010473.1"/>
</dbReference>
<dbReference type="SMR" id="B1XHI3"/>
<dbReference type="CAZy" id="GT51">
    <property type="family name" value="Glycosyltransferase Family 51"/>
</dbReference>
<dbReference type="GeneID" id="75206064"/>
<dbReference type="KEGG" id="ecd:ECDH10B_3382"/>
<dbReference type="HOGENOM" id="CLU_006354_1_1_6"/>
<dbReference type="UniPathway" id="UPA00219"/>
<dbReference type="GO" id="GO:0009274">
    <property type="term" value="C:peptidoglycan-based cell wall"/>
    <property type="evidence" value="ECO:0007669"/>
    <property type="project" value="InterPro"/>
</dbReference>
<dbReference type="GO" id="GO:0005886">
    <property type="term" value="C:plasma membrane"/>
    <property type="evidence" value="ECO:0007669"/>
    <property type="project" value="UniProtKB-SubCell"/>
</dbReference>
<dbReference type="GO" id="GO:0016763">
    <property type="term" value="F:pentosyltransferase activity"/>
    <property type="evidence" value="ECO:0007669"/>
    <property type="project" value="InterPro"/>
</dbReference>
<dbReference type="GO" id="GO:0008955">
    <property type="term" value="F:peptidoglycan glycosyltransferase activity"/>
    <property type="evidence" value="ECO:0007669"/>
    <property type="project" value="UniProtKB-UniRule"/>
</dbReference>
<dbReference type="GO" id="GO:0071555">
    <property type="term" value="P:cell wall organization"/>
    <property type="evidence" value="ECO:0007669"/>
    <property type="project" value="UniProtKB-KW"/>
</dbReference>
<dbReference type="GO" id="GO:0009252">
    <property type="term" value="P:peptidoglycan biosynthetic process"/>
    <property type="evidence" value="ECO:0007669"/>
    <property type="project" value="UniProtKB-UniRule"/>
</dbReference>
<dbReference type="GO" id="GO:0008360">
    <property type="term" value="P:regulation of cell shape"/>
    <property type="evidence" value="ECO:0007669"/>
    <property type="project" value="UniProtKB-KW"/>
</dbReference>
<dbReference type="FunFam" id="1.10.3810.10:FF:000004">
    <property type="entry name" value="Biosynthetic peptidoglycan transglycosylase"/>
    <property type="match status" value="1"/>
</dbReference>
<dbReference type="Gene3D" id="1.10.3810.10">
    <property type="entry name" value="Biosynthetic peptidoglycan transglycosylase-like"/>
    <property type="match status" value="1"/>
</dbReference>
<dbReference type="HAMAP" id="MF_00766">
    <property type="entry name" value="PGT_MtgA"/>
    <property type="match status" value="1"/>
</dbReference>
<dbReference type="InterPro" id="IPR001264">
    <property type="entry name" value="Glyco_trans_51"/>
</dbReference>
<dbReference type="InterPro" id="IPR023346">
    <property type="entry name" value="Lysozyme-like_dom_sf"/>
</dbReference>
<dbReference type="InterPro" id="IPR036950">
    <property type="entry name" value="PBP_transglycosylase"/>
</dbReference>
<dbReference type="InterPro" id="IPR011812">
    <property type="entry name" value="Pep_trsgly"/>
</dbReference>
<dbReference type="NCBIfam" id="TIGR02070">
    <property type="entry name" value="mono_pep_trsgly"/>
    <property type="match status" value="1"/>
</dbReference>
<dbReference type="PANTHER" id="PTHR30400:SF0">
    <property type="entry name" value="BIOSYNTHETIC PEPTIDOGLYCAN TRANSGLYCOSYLASE"/>
    <property type="match status" value="1"/>
</dbReference>
<dbReference type="PANTHER" id="PTHR30400">
    <property type="entry name" value="MONOFUNCTIONAL BIOSYNTHETIC PEPTIDOGLYCAN TRANSGLYCOSYLASE"/>
    <property type="match status" value="1"/>
</dbReference>
<dbReference type="Pfam" id="PF00912">
    <property type="entry name" value="Transgly"/>
    <property type="match status" value="1"/>
</dbReference>
<dbReference type="SUPFAM" id="SSF53955">
    <property type="entry name" value="Lysozyme-like"/>
    <property type="match status" value="1"/>
</dbReference>
<organism>
    <name type="scientific">Escherichia coli (strain K12 / DH10B)</name>
    <dbReference type="NCBI Taxonomy" id="316385"/>
    <lineage>
        <taxon>Bacteria</taxon>
        <taxon>Pseudomonadati</taxon>
        <taxon>Pseudomonadota</taxon>
        <taxon>Gammaproteobacteria</taxon>
        <taxon>Enterobacterales</taxon>
        <taxon>Enterobacteriaceae</taxon>
        <taxon>Escherichia</taxon>
    </lineage>
</organism>
<accession>B1XHI3</accession>
<comment type="function">
    <text evidence="1">Peptidoglycan polymerase that catalyzes glycan chain elongation from lipid-linked precursors.</text>
</comment>
<comment type="catalytic activity">
    <reaction evidence="1">
        <text>[GlcNAc-(1-&gt;4)-Mur2Ac(oyl-L-Ala-gamma-D-Glu-L-Lys-D-Ala-D-Ala)](n)-di-trans,octa-cis-undecaprenyl diphosphate + beta-D-GlcNAc-(1-&gt;4)-Mur2Ac(oyl-L-Ala-gamma-D-Glu-L-Lys-D-Ala-D-Ala)-di-trans,octa-cis-undecaprenyl diphosphate = [GlcNAc-(1-&gt;4)-Mur2Ac(oyl-L-Ala-gamma-D-Glu-L-Lys-D-Ala-D-Ala)](n+1)-di-trans,octa-cis-undecaprenyl diphosphate + di-trans,octa-cis-undecaprenyl diphosphate + H(+)</text>
        <dbReference type="Rhea" id="RHEA:23708"/>
        <dbReference type="Rhea" id="RHEA-COMP:9602"/>
        <dbReference type="Rhea" id="RHEA-COMP:9603"/>
        <dbReference type="ChEBI" id="CHEBI:15378"/>
        <dbReference type="ChEBI" id="CHEBI:58405"/>
        <dbReference type="ChEBI" id="CHEBI:60033"/>
        <dbReference type="ChEBI" id="CHEBI:78435"/>
        <dbReference type="EC" id="2.4.99.28"/>
    </reaction>
</comment>
<comment type="pathway">
    <text evidence="1">Cell wall biogenesis; peptidoglycan biosynthesis.</text>
</comment>
<comment type="subcellular location">
    <subcellularLocation>
        <location evidence="1">Cell inner membrane</location>
        <topology evidence="1">Single-pass membrane protein</topology>
    </subcellularLocation>
</comment>
<comment type="similarity">
    <text evidence="1">Belongs to the glycosyltransferase 51 family.</text>
</comment>
<evidence type="ECO:0000255" key="1">
    <source>
        <dbReference type="HAMAP-Rule" id="MF_00766"/>
    </source>
</evidence>
<keyword id="KW-0997">Cell inner membrane</keyword>
<keyword id="KW-1003">Cell membrane</keyword>
<keyword id="KW-0133">Cell shape</keyword>
<keyword id="KW-0961">Cell wall biogenesis/degradation</keyword>
<keyword id="KW-0328">Glycosyltransferase</keyword>
<keyword id="KW-0472">Membrane</keyword>
<keyword id="KW-0573">Peptidoglycan synthesis</keyword>
<keyword id="KW-0808">Transferase</keyword>
<keyword id="KW-0812">Transmembrane</keyword>
<keyword id="KW-1133">Transmembrane helix</keyword>
<protein>
    <recommendedName>
        <fullName evidence="1">Biosynthetic peptidoglycan transglycosylase</fullName>
        <ecNumber evidence="1">2.4.99.28</ecNumber>
    </recommendedName>
    <alternativeName>
        <fullName evidence="1">Glycan polymerase</fullName>
    </alternativeName>
    <alternativeName>
        <fullName evidence="1">Peptidoglycan glycosyltransferase MtgA</fullName>
        <shortName evidence="1">PGT</shortName>
    </alternativeName>
</protein>
<sequence>MSKSRLTVFSFVRRFLLRLMVVLAVFWGGGIALFSVAPVPFSAVMVERQVSAWLHGNFRYVAHSDWVSMDQISPWMGLAVIAAEDQKFPEHWGFDVASIEKALAHNERNENRIRGASTISQQTAKNLFLWDGRSWVRKGLEAGLTLGIETVWSKKRILTVYLNIAEFGDGVFGVEAAAQRYFHKPASKLTRSEAALLAAVLPNPLRFKVSSPSGYVRSRQAWILRQMYQLGGEPFMQQHQLD</sequence>
<gene>
    <name evidence="1" type="primary">mtgA</name>
    <name type="ordered locus">ECDH10B_3382</name>
</gene>
<reference key="1">
    <citation type="journal article" date="2008" name="J. Bacteriol.">
        <title>The complete genome sequence of Escherichia coli DH10B: insights into the biology of a laboratory workhorse.</title>
        <authorList>
            <person name="Durfee T."/>
            <person name="Nelson R."/>
            <person name="Baldwin S."/>
            <person name="Plunkett G. III"/>
            <person name="Burland V."/>
            <person name="Mau B."/>
            <person name="Petrosino J.F."/>
            <person name="Qin X."/>
            <person name="Muzny D.M."/>
            <person name="Ayele M."/>
            <person name="Gibbs R.A."/>
            <person name="Csorgo B."/>
            <person name="Posfai G."/>
            <person name="Weinstock G.M."/>
            <person name="Blattner F.R."/>
        </authorList>
    </citation>
    <scope>NUCLEOTIDE SEQUENCE [LARGE SCALE GENOMIC DNA]</scope>
    <source>
        <strain>K12 / DH10B</strain>
    </source>
</reference>
<name>MTGA_ECODH</name>
<proteinExistence type="inferred from homology"/>
<feature type="chain" id="PRO_1000133594" description="Biosynthetic peptidoglycan transglycosylase">
    <location>
        <begin position="1"/>
        <end position="242"/>
    </location>
</feature>
<feature type="transmembrane region" description="Helical" evidence="1">
    <location>
        <begin position="19"/>
        <end position="39"/>
    </location>
</feature>